<comment type="function">
    <text evidence="1">Dephosphorylates 2-hydroxy-3-keto-5-methylthiopentenyl-1-phosphate (HK-MTPenyl-1-P) yielding 1,2-dihydroxy-3-keto-5-methylthiopentene (DHK-MTPene).</text>
</comment>
<comment type="catalytic activity">
    <reaction evidence="1">
        <text>2-hydroxy-5-methylsulfanyl-3-oxopent-1-enyl phosphate + H2O = 1,2-dihydroxy-5-(methylsulfanyl)pent-1-en-3-one + phosphate</text>
        <dbReference type="Rhea" id="RHEA:14481"/>
        <dbReference type="ChEBI" id="CHEBI:15377"/>
        <dbReference type="ChEBI" id="CHEBI:43474"/>
        <dbReference type="ChEBI" id="CHEBI:49252"/>
        <dbReference type="ChEBI" id="CHEBI:59505"/>
        <dbReference type="EC" id="3.1.3.87"/>
    </reaction>
</comment>
<comment type="pathway">
    <text evidence="1">Amino-acid biosynthesis; L-methionine biosynthesis via salvage pathway; L-methionine from S-methyl-5-thio-alpha-D-ribose 1-phosphate: step 4/6.</text>
</comment>
<comment type="similarity">
    <text evidence="1">Belongs to the HAD-like hydrolase superfamily. MtnX family.</text>
</comment>
<dbReference type="EC" id="3.1.3.87" evidence="1"/>
<dbReference type="EMBL" id="AE017355">
    <property type="protein sequence ID" value="AAT63036.1"/>
    <property type="molecule type" value="Genomic_DNA"/>
</dbReference>
<dbReference type="RefSeq" id="WP_000027474.1">
    <property type="nucleotide sequence ID" value="NC_005957.1"/>
</dbReference>
<dbReference type="RefSeq" id="YP_038098.1">
    <property type="nucleotide sequence ID" value="NC_005957.1"/>
</dbReference>
<dbReference type="SMR" id="Q6HEC8"/>
<dbReference type="KEGG" id="btk:BT9727_3779"/>
<dbReference type="PATRIC" id="fig|281309.8.peg.4029"/>
<dbReference type="HOGENOM" id="CLU_058495_2_1_9"/>
<dbReference type="UniPathway" id="UPA00904">
    <property type="reaction ID" value="UER00877"/>
</dbReference>
<dbReference type="Proteomes" id="UP000001301">
    <property type="component" value="Chromosome"/>
</dbReference>
<dbReference type="GO" id="GO:0043716">
    <property type="term" value="F:2-hydroxy-3-keto-5-methylthiopentenyl-1-phosphate phosphatase activity"/>
    <property type="evidence" value="ECO:0007669"/>
    <property type="project" value="UniProtKB-UniRule"/>
</dbReference>
<dbReference type="GO" id="GO:0019509">
    <property type="term" value="P:L-methionine salvage from methylthioadenosine"/>
    <property type="evidence" value="ECO:0007669"/>
    <property type="project" value="UniProtKB-UniRule"/>
</dbReference>
<dbReference type="CDD" id="cd07524">
    <property type="entry name" value="HAD_Pase"/>
    <property type="match status" value="1"/>
</dbReference>
<dbReference type="Gene3D" id="3.90.1470.20">
    <property type="match status" value="1"/>
</dbReference>
<dbReference type="Gene3D" id="3.40.50.1000">
    <property type="entry name" value="HAD superfamily/HAD-like"/>
    <property type="match status" value="1"/>
</dbReference>
<dbReference type="HAMAP" id="MF_01680">
    <property type="entry name" value="Salvage_MtnX"/>
    <property type="match status" value="1"/>
</dbReference>
<dbReference type="InterPro" id="IPR050849">
    <property type="entry name" value="HAD-like_hydrolase_phosphatase"/>
</dbReference>
<dbReference type="InterPro" id="IPR036412">
    <property type="entry name" value="HAD-like_sf"/>
</dbReference>
<dbReference type="InterPro" id="IPR017718">
    <property type="entry name" value="HAD-SF_hydro_IB_MtnX"/>
</dbReference>
<dbReference type="InterPro" id="IPR006384">
    <property type="entry name" value="HAD_hydro_PyrdxlP_Pase-like"/>
</dbReference>
<dbReference type="InterPro" id="IPR023214">
    <property type="entry name" value="HAD_sf"/>
</dbReference>
<dbReference type="NCBIfam" id="TIGR01489">
    <property type="entry name" value="DKMTPPase-SF"/>
    <property type="match status" value="1"/>
</dbReference>
<dbReference type="NCBIfam" id="TIGR01488">
    <property type="entry name" value="HAD-SF-IB"/>
    <property type="match status" value="1"/>
</dbReference>
<dbReference type="NCBIfam" id="NF007103">
    <property type="entry name" value="PRK09552.1"/>
    <property type="match status" value="1"/>
</dbReference>
<dbReference type="NCBIfam" id="TIGR03333">
    <property type="entry name" value="salvage_mtnX"/>
    <property type="match status" value="1"/>
</dbReference>
<dbReference type="PANTHER" id="PTHR28181:SF2">
    <property type="entry name" value="PHOSPHORIC MONOESTER HYDROLASE"/>
    <property type="match status" value="1"/>
</dbReference>
<dbReference type="PANTHER" id="PTHR28181">
    <property type="entry name" value="UPF0655 PROTEIN YCR015C"/>
    <property type="match status" value="1"/>
</dbReference>
<dbReference type="Pfam" id="PF12710">
    <property type="entry name" value="HAD"/>
    <property type="match status" value="1"/>
</dbReference>
<dbReference type="SUPFAM" id="SSF56784">
    <property type="entry name" value="HAD-like"/>
    <property type="match status" value="1"/>
</dbReference>
<reference key="1">
    <citation type="journal article" date="2006" name="J. Bacteriol.">
        <title>Pathogenomic sequence analysis of Bacillus cereus and Bacillus thuringiensis isolates closely related to Bacillus anthracis.</title>
        <authorList>
            <person name="Han C.S."/>
            <person name="Xie G."/>
            <person name="Challacombe J.F."/>
            <person name="Altherr M.R."/>
            <person name="Bhotika S.S."/>
            <person name="Bruce D."/>
            <person name="Campbell C.S."/>
            <person name="Campbell M.L."/>
            <person name="Chen J."/>
            <person name="Chertkov O."/>
            <person name="Cleland C."/>
            <person name="Dimitrijevic M."/>
            <person name="Doggett N.A."/>
            <person name="Fawcett J.J."/>
            <person name="Glavina T."/>
            <person name="Goodwin L.A."/>
            <person name="Hill K.K."/>
            <person name="Hitchcock P."/>
            <person name="Jackson P.J."/>
            <person name="Keim P."/>
            <person name="Kewalramani A.R."/>
            <person name="Longmire J."/>
            <person name="Lucas S."/>
            <person name="Malfatti S."/>
            <person name="McMurry K."/>
            <person name="Meincke L.J."/>
            <person name="Misra M."/>
            <person name="Moseman B.L."/>
            <person name="Mundt M."/>
            <person name="Munk A.C."/>
            <person name="Okinaka R.T."/>
            <person name="Parson-Quintana B."/>
            <person name="Reilly L.P."/>
            <person name="Richardson P."/>
            <person name="Robinson D.L."/>
            <person name="Rubin E."/>
            <person name="Saunders E."/>
            <person name="Tapia R."/>
            <person name="Tesmer J.G."/>
            <person name="Thayer N."/>
            <person name="Thompson L.S."/>
            <person name="Tice H."/>
            <person name="Ticknor L.O."/>
            <person name="Wills P.L."/>
            <person name="Brettin T.S."/>
            <person name="Gilna P."/>
        </authorList>
    </citation>
    <scope>NUCLEOTIDE SEQUENCE [LARGE SCALE GENOMIC DNA]</scope>
    <source>
        <strain>97-27</strain>
    </source>
</reference>
<sequence length="219" mass="25284">MSIQVFCDFDGTITNNDNIMSIMEKFAPPEAEEVKNRILSQELSIQEGVSQLFQLIPTNLHDEIIQFLIETAEIRNGFHEFIQFVNENNISFYVISGGMDFFVYPLLQGLIPKEQIYCNETDFSNEYITVNWPHPCDRHCQNHCGLCKSSLIRKLGDTNDFHIVIGDSITDLQAAKQADKVFARDFLITKCEENHISYTPFETFHDVQTELKHLLEVKL</sequence>
<feature type="chain" id="PRO_0000357480" description="2-hydroxy-3-keto-5-methylthiopentenyl-1-phosphate phosphatase">
    <location>
        <begin position="1"/>
        <end position="219"/>
    </location>
</feature>
<keyword id="KW-0028">Amino-acid biosynthesis</keyword>
<keyword id="KW-0378">Hydrolase</keyword>
<keyword id="KW-0486">Methionine biosynthesis</keyword>
<name>MTNX_BACHK</name>
<protein>
    <recommendedName>
        <fullName evidence="1">2-hydroxy-3-keto-5-methylthiopentenyl-1-phosphate phosphatase</fullName>
        <shortName evidence="1">HK-MTPenyl-1-P phosphatase</shortName>
        <ecNumber evidence="1">3.1.3.87</ecNumber>
    </recommendedName>
</protein>
<proteinExistence type="inferred from homology"/>
<evidence type="ECO:0000255" key="1">
    <source>
        <dbReference type="HAMAP-Rule" id="MF_01680"/>
    </source>
</evidence>
<gene>
    <name evidence="1" type="primary">mtnX</name>
    <name type="ordered locus">BT9727_3779</name>
</gene>
<organism>
    <name type="scientific">Bacillus thuringiensis subsp. konkukian (strain 97-27)</name>
    <dbReference type="NCBI Taxonomy" id="281309"/>
    <lineage>
        <taxon>Bacteria</taxon>
        <taxon>Bacillati</taxon>
        <taxon>Bacillota</taxon>
        <taxon>Bacilli</taxon>
        <taxon>Bacillales</taxon>
        <taxon>Bacillaceae</taxon>
        <taxon>Bacillus</taxon>
        <taxon>Bacillus cereus group</taxon>
    </lineage>
</organism>
<accession>Q6HEC8</accession>